<keyword id="KW-0963">Cytoplasm</keyword>
<keyword id="KW-0378">Hydrolase</keyword>
<keyword id="KW-0520">NAD</keyword>
<keyword id="KW-0554">One-carbon metabolism</keyword>
<keyword id="KW-1185">Reference proteome</keyword>
<sequence length="472" mass="51173">MATLAADTRDYVVADIGLADFGRKEINIAETEMPGLMALRAEYGASQPLKGARITGSLHMTIQTAVLIETLTALGAEVRWATCNIFSTQNHAAAAIAASGVPVFAVKGESLADYWDYVGRIFDWESDNDGRTANLILDDGGDATMFALWGAKLEAGETMPPPENEEEVEMQRALKAFIAAKPGYLTKTVKAIKGVSEETTTGVHRLYHIAKKGELPFPAINVNDSVTKSKFDNLYGCKESLVDAIRRGTDVMLAGKVATVAGFGDVGKGSAQSLRNGGARVLVTEIDPICALQAAMEGFEVVTMDEAVKRSDIFVTATGNADVITAEHMAAMKNMAIVCNIGHFDSEIQIAALANYKWTEVKPQVDLVEFPDGKQIIILSKGRLVNLGNATGHPSFVMSASFTNQTLAQIELWTRSEQYQNDVYVLPKHLDEKVAALHLEKLGVKLTKLTQKQADYIGVPVEGPFKPDHYRY</sequence>
<dbReference type="EC" id="3.13.2.1" evidence="1"/>
<dbReference type="EMBL" id="CP000356">
    <property type="protein sequence ID" value="ABF51887.1"/>
    <property type="molecule type" value="Genomic_DNA"/>
</dbReference>
<dbReference type="RefSeq" id="WP_011540479.1">
    <property type="nucleotide sequence ID" value="NC_008048.1"/>
</dbReference>
<dbReference type="SMR" id="Q1GWT5"/>
<dbReference type="STRING" id="317655.Sala_0163"/>
<dbReference type="KEGG" id="sal:Sala_0163"/>
<dbReference type="eggNOG" id="COG0499">
    <property type="taxonomic scope" value="Bacteria"/>
</dbReference>
<dbReference type="HOGENOM" id="CLU_025194_2_1_5"/>
<dbReference type="OrthoDB" id="9802717at2"/>
<dbReference type="UniPathway" id="UPA00314">
    <property type="reaction ID" value="UER00076"/>
</dbReference>
<dbReference type="Proteomes" id="UP000006578">
    <property type="component" value="Chromosome"/>
</dbReference>
<dbReference type="GO" id="GO:0005829">
    <property type="term" value="C:cytosol"/>
    <property type="evidence" value="ECO:0007669"/>
    <property type="project" value="TreeGrafter"/>
</dbReference>
<dbReference type="GO" id="GO:0004013">
    <property type="term" value="F:adenosylhomocysteinase activity"/>
    <property type="evidence" value="ECO:0007669"/>
    <property type="project" value="UniProtKB-UniRule"/>
</dbReference>
<dbReference type="GO" id="GO:0071269">
    <property type="term" value="P:L-homocysteine biosynthetic process"/>
    <property type="evidence" value="ECO:0007669"/>
    <property type="project" value="UniProtKB-UniRule"/>
</dbReference>
<dbReference type="GO" id="GO:0006730">
    <property type="term" value="P:one-carbon metabolic process"/>
    <property type="evidence" value="ECO:0007669"/>
    <property type="project" value="UniProtKB-KW"/>
</dbReference>
<dbReference type="GO" id="GO:0033353">
    <property type="term" value="P:S-adenosylmethionine cycle"/>
    <property type="evidence" value="ECO:0007669"/>
    <property type="project" value="TreeGrafter"/>
</dbReference>
<dbReference type="CDD" id="cd00401">
    <property type="entry name" value="SAHH"/>
    <property type="match status" value="1"/>
</dbReference>
<dbReference type="FunFam" id="3.40.50.720:FF:000004">
    <property type="entry name" value="Adenosylhomocysteinase"/>
    <property type="match status" value="1"/>
</dbReference>
<dbReference type="Gene3D" id="3.40.50.1480">
    <property type="entry name" value="Adenosylhomocysteinase-like"/>
    <property type="match status" value="1"/>
</dbReference>
<dbReference type="Gene3D" id="3.40.50.720">
    <property type="entry name" value="NAD(P)-binding Rossmann-like Domain"/>
    <property type="match status" value="1"/>
</dbReference>
<dbReference type="HAMAP" id="MF_00563">
    <property type="entry name" value="AdoHcyase"/>
    <property type="match status" value="1"/>
</dbReference>
<dbReference type="InterPro" id="IPR042172">
    <property type="entry name" value="Adenosylhomocyst_ase-like_sf"/>
</dbReference>
<dbReference type="InterPro" id="IPR000043">
    <property type="entry name" value="Adenosylhomocysteinase-like"/>
</dbReference>
<dbReference type="InterPro" id="IPR015878">
    <property type="entry name" value="Ado_hCys_hydrolase_NAD-bd"/>
</dbReference>
<dbReference type="InterPro" id="IPR036291">
    <property type="entry name" value="NAD(P)-bd_dom_sf"/>
</dbReference>
<dbReference type="InterPro" id="IPR020082">
    <property type="entry name" value="S-Ado-L-homoCys_hydrolase_CS"/>
</dbReference>
<dbReference type="NCBIfam" id="TIGR00936">
    <property type="entry name" value="ahcY"/>
    <property type="match status" value="1"/>
</dbReference>
<dbReference type="NCBIfam" id="NF004005">
    <property type="entry name" value="PRK05476.2-3"/>
    <property type="match status" value="1"/>
</dbReference>
<dbReference type="PANTHER" id="PTHR23420">
    <property type="entry name" value="ADENOSYLHOMOCYSTEINASE"/>
    <property type="match status" value="1"/>
</dbReference>
<dbReference type="PANTHER" id="PTHR23420:SF0">
    <property type="entry name" value="ADENOSYLHOMOCYSTEINASE"/>
    <property type="match status" value="1"/>
</dbReference>
<dbReference type="Pfam" id="PF05221">
    <property type="entry name" value="AdoHcyase"/>
    <property type="match status" value="1"/>
</dbReference>
<dbReference type="Pfam" id="PF00670">
    <property type="entry name" value="AdoHcyase_NAD"/>
    <property type="match status" value="1"/>
</dbReference>
<dbReference type="PIRSF" id="PIRSF001109">
    <property type="entry name" value="Ad_hcy_hydrolase"/>
    <property type="match status" value="1"/>
</dbReference>
<dbReference type="SMART" id="SM00996">
    <property type="entry name" value="AdoHcyase"/>
    <property type="match status" value="1"/>
</dbReference>
<dbReference type="SMART" id="SM00997">
    <property type="entry name" value="AdoHcyase_NAD"/>
    <property type="match status" value="1"/>
</dbReference>
<dbReference type="SUPFAM" id="SSF52283">
    <property type="entry name" value="Formate/glycerate dehydrogenase catalytic domain-like"/>
    <property type="match status" value="1"/>
</dbReference>
<dbReference type="SUPFAM" id="SSF51735">
    <property type="entry name" value="NAD(P)-binding Rossmann-fold domains"/>
    <property type="match status" value="1"/>
</dbReference>
<dbReference type="PROSITE" id="PS00739">
    <property type="entry name" value="ADOHCYASE_2"/>
    <property type="match status" value="1"/>
</dbReference>
<protein>
    <recommendedName>
        <fullName evidence="1">Adenosylhomocysteinase</fullName>
        <ecNumber evidence="1">3.13.2.1</ecNumber>
    </recommendedName>
    <alternativeName>
        <fullName evidence="1">S-adenosyl-L-homocysteine hydrolase</fullName>
        <shortName evidence="1">AdoHcyase</shortName>
    </alternativeName>
</protein>
<comment type="function">
    <text evidence="1">May play a key role in the regulation of the intracellular concentration of adenosylhomocysteine.</text>
</comment>
<comment type="catalytic activity">
    <reaction evidence="1">
        <text>S-adenosyl-L-homocysteine + H2O = L-homocysteine + adenosine</text>
        <dbReference type="Rhea" id="RHEA:21708"/>
        <dbReference type="ChEBI" id="CHEBI:15377"/>
        <dbReference type="ChEBI" id="CHEBI:16335"/>
        <dbReference type="ChEBI" id="CHEBI:57856"/>
        <dbReference type="ChEBI" id="CHEBI:58199"/>
        <dbReference type="EC" id="3.13.2.1"/>
    </reaction>
</comment>
<comment type="cofactor">
    <cofactor evidence="1">
        <name>NAD(+)</name>
        <dbReference type="ChEBI" id="CHEBI:57540"/>
    </cofactor>
    <text evidence="1">Binds 1 NAD(+) per subunit.</text>
</comment>
<comment type="pathway">
    <text evidence="1">Amino-acid biosynthesis; L-homocysteine biosynthesis; L-homocysteine from S-adenosyl-L-homocysteine: step 1/1.</text>
</comment>
<comment type="subcellular location">
    <subcellularLocation>
        <location evidence="1">Cytoplasm</location>
    </subcellularLocation>
</comment>
<comment type="similarity">
    <text evidence="1">Belongs to the adenosylhomocysteinase family.</text>
</comment>
<reference key="1">
    <citation type="journal article" date="2009" name="Proc. Natl. Acad. Sci. U.S.A.">
        <title>The genomic basis of trophic strategy in marine bacteria.</title>
        <authorList>
            <person name="Lauro F.M."/>
            <person name="McDougald D."/>
            <person name="Thomas T."/>
            <person name="Williams T.J."/>
            <person name="Egan S."/>
            <person name="Rice S."/>
            <person name="DeMaere M.Z."/>
            <person name="Ting L."/>
            <person name="Ertan H."/>
            <person name="Johnson J."/>
            <person name="Ferriera S."/>
            <person name="Lapidus A."/>
            <person name="Anderson I."/>
            <person name="Kyrpides N."/>
            <person name="Munk A.C."/>
            <person name="Detter C."/>
            <person name="Han C.S."/>
            <person name="Brown M.V."/>
            <person name="Robb F.T."/>
            <person name="Kjelleberg S."/>
            <person name="Cavicchioli R."/>
        </authorList>
    </citation>
    <scope>NUCLEOTIDE SEQUENCE [LARGE SCALE GENOMIC DNA]</scope>
    <source>
        <strain>DSM 13593 / LMG 18877 / RB2256</strain>
    </source>
</reference>
<name>SAHH_SPHAL</name>
<proteinExistence type="inferred from homology"/>
<organism>
    <name type="scientific">Sphingopyxis alaskensis (strain DSM 13593 / LMG 18877 / RB2256)</name>
    <name type="common">Sphingomonas alaskensis</name>
    <dbReference type="NCBI Taxonomy" id="317655"/>
    <lineage>
        <taxon>Bacteria</taxon>
        <taxon>Pseudomonadati</taxon>
        <taxon>Pseudomonadota</taxon>
        <taxon>Alphaproteobacteria</taxon>
        <taxon>Sphingomonadales</taxon>
        <taxon>Sphingomonadaceae</taxon>
        <taxon>Sphingopyxis</taxon>
    </lineage>
</organism>
<gene>
    <name evidence="1" type="primary">ahcY</name>
    <name type="ordered locus">Sala_0163</name>
</gene>
<accession>Q1GWT5</accession>
<evidence type="ECO:0000255" key="1">
    <source>
        <dbReference type="HAMAP-Rule" id="MF_00563"/>
    </source>
</evidence>
<feature type="chain" id="PRO_1000024759" description="Adenosylhomocysteinase">
    <location>
        <begin position="1"/>
        <end position="472"/>
    </location>
</feature>
<feature type="binding site" evidence="1">
    <location>
        <position position="61"/>
    </location>
    <ligand>
        <name>substrate</name>
    </ligand>
</feature>
<feature type="binding site" evidence="1">
    <location>
        <position position="139"/>
    </location>
    <ligand>
        <name>substrate</name>
    </ligand>
</feature>
<feature type="binding site" evidence="1">
    <location>
        <position position="198"/>
    </location>
    <ligand>
        <name>substrate</name>
    </ligand>
</feature>
<feature type="binding site" evidence="1">
    <location>
        <begin position="199"/>
        <end position="201"/>
    </location>
    <ligand>
        <name>NAD(+)</name>
        <dbReference type="ChEBI" id="CHEBI:57540"/>
    </ligand>
</feature>
<feature type="binding site" evidence="1">
    <location>
        <position position="228"/>
    </location>
    <ligand>
        <name>substrate</name>
    </ligand>
</feature>
<feature type="binding site" evidence="1">
    <location>
        <position position="232"/>
    </location>
    <ligand>
        <name>substrate</name>
    </ligand>
</feature>
<feature type="binding site" evidence="1">
    <location>
        <position position="233"/>
    </location>
    <ligand>
        <name>NAD(+)</name>
        <dbReference type="ChEBI" id="CHEBI:57540"/>
    </ligand>
</feature>
<feature type="binding site" evidence="1">
    <location>
        <begin position="262"/>
        <end position="267"/>
    </location>
    <ligand>
        <name>NAD(+)</name>
        <dbReference type="ChEBI" id="CHEBI:57540"/>
    </ligand>
</feature>
<feature type="binding site" evidence="1">
    <location>
        <position position="285"/>
    </location>
    <ligand>
        <name>NAD(+)</name>
        <dbReference type="ChEBI" id="CHEBI:57540"/>
    </ligand>
</feature>
<feature type="binding site" evidence="1">
    <location>
        <position position="320"/>
    </location>
    <ligand>
        <name>NAD(+)</name>
        <dbReference type="ChEBI" id="CHEBI:57540"/>
    </ligand>
</feature>
<feature type="binding site" evidence="1">
    <location>
        <begin position="341"/>
        <end position="343"/>
    </location>
    <ligand>
        <name>NAD(+)</name>
        <dbReference type="ChEBI" id="CHEBI:57540"/>
    </ligand>
</feature>
<feature type="binding site" evidence="1">
    <location>
        <position position="386"/>
    </location>
    <ligand>
        <name>NAD(+)</name>
        <dbReference type="ChEBI" id="CHEBI:57540"/>
    </ligand>
</feature>